<feature type="chain" id="PRO_0000116095" description="Tegument protein VP22">
    <location>
        <begin position="1"/>
        <end position="304"/>
    </location>
</feature>
<feature type="region of interest" description="Disordered" evidence="3">
    <location>
        <begin position="23"/>
        <end position="68"/>
    </location>
</feature>
<feature type="region of interest" description="Disordered" evidence="3">
    <location>
        <begin position="112"/>
        <end position="184"/>
    </location>
</feature>
<feature type="region of interest" description="Disordered" evidence="3">
    <location>
        <begin position="262"/>
        <end position="304"/>
    </location>
</feature>
<feature type="short sequence motif" description="Nuclear localization signal" evidence="2">
    <location>
        <begin position="160"/>
        <end position="163"/>
    </location>
</feature>
<feature type="short sequence motif" description="Nuclear export signal" evidence="2">
    <location>
        <begin position="233"/>
        <end position="245"/>
    </location>
</feature>
<feature type="compositionally biased region" description="Basic and acidic residues" evidence="3">
    <location>
        <begin position="43"/>
        <end position="58"/>
    </location>
</feature>
<feature type="compositionally biased region" description="Pro residues" evidence="3">
    <location>
        <begin position="123"/>
        <end position="142"/>
    </location>
</feature>
<feature type="compositionally biased region" description="Low complexity" evidence="3">
    <location>
        <begin position="143"/>
        <end position="154"/>
    </location>
</feature>
<feature type="compositionally biased region" description="Basic residues" evidence="3">
    <location>
        <begin position="280"/>
        <end position="289"/>
    </location>
</feature>
<proteinExistence type="inferred from homology"/>
<evidence type="ECO:0000250" key="1">
    <source>
        <dbReference type="UniProtKB" id="P10233"/>
    </source>
</evidence>
<evidence type="ECO:0000250" key="2">
    <source>
        <dbReference type="UniProtKB" id="P30022"/>
    </source>
</evidence>
<evidence type="ECO:0000256" key="3">
    <source>
        <dbReference type="SAM" id="MobiDB-lite"/>
    </source>
</evidence>
<evidence type="ECO:0000305" key="4"/>
<gene>
    <name type="ordered locus">11</name>
</gene>
<reference key="1">
    <citation type="journal article" date="1992" name="Virology">
        <title>The DNA sequence of equine herpesvirus-1.</title>
        <authorList>
            <person name="Telford E.A.R."/>
            <person name="Watson M.S."/>
            <person name="McBride K."/>
            <person name="Davison A.J."/>
        </authorList>
    </citation>
    <scope>NUCLEOTIDE SEQUENCE [LARGE SCALE GENOMIC DNA]</scope>
</reference>
<name>VP22_EHV1B</name>
<protein>
    <recommendedName>
        <fullName>Tegument protein VP22</fullName>
    </recommendedName>
    <alternativeName>
        <fullName>Gene 11 protein</fullName>
    </alternativeName>
</protein>
<comment type="function">
    <text evidence="1">Tegument protein that plays different roles during the time course of infection (By similarity). Participates in both the accumulation of viral mRNAs and viral protein translation at late time of infection (By similarity). Modulates the RNase activity of the virion host shutoff protein UL41 probably to ensure necessary levels of key cellular mRNAs and proteins (By similarity). Plays a role in microtubule reorganization that occurs after viral infection by stabilizing microtubule network (By similarity). Plays a role in the inhibition of host innate immune system by targeting the CGAS enzymatic activity which is the principal cytosolic DNA sensor that detects invading viral DNA. Acts by mediating disruption of liquid-like droplets in which CGAS is activated, thereby preventing CGAS activity (By similarity).</text>
</comment>
<comment type="subunit">
    <text evidence="1">Interacts with gE (via C-terminus); this interaction is necessary for the recruitment of VP22 to the Golgi and its packaging into virions (By similarity). Interacts with gM (via C-terminus) (By similarity). Interacts with VP16; this interaction allows the formation of a tripartite complex composed of VP16, VP22 and UL41/VHS (By similarity). Interacts with the capsid-binding protein UL16 (By similarity). Interacts with host CGAS (By similarity).</text>
</comment>
<comment type="subcellular location">
    <subcellularLocation>
        <location evidence="1">Virion tegument</location>
    </subcellularLocation>
    <subcellularLocation>
        <location evidence="1">Host cytoplasm</location>
    </subcellularLocation>
    <subcellularLocation>
        <location evidence="1">Host nucleus</location>
    </subcellularLocation>
    <subcellularLocation>
        <location evidence="1">Host Golgi apparatus</location>
    </subcellularLocation>
    <text evidence="1">One of the most abundant tegument protein (about 2000 copies per virion). Localizes in the cytoplasm at 8 hours postinfection and in the nucleus at 16 hours postinfection. During virion morphogenesis, this protein probably accumulates at the trans-Golgi where secondary envelopment occurs.</text>
</comment>
<comment type="PTM">
    <text evidence="1">Highly phosphorylated in the host cell. Packaging is selective for underphosphorylated forms.</text>
</comment>
<comment type="similarity">
    <text evidence="4">Belongs to the alphaherpesvirinae VP22 tegument protein family.</text>
</comment>
<accession>P28960</accession>
<accession>Q6DLK0</accession>
<dbReference type="EMBL" id="AY665713">
    <property type="protein sequence ID" value="AAT67268.1"/>
    <property type="molecule type" value="Genomic_DNA"/>
</dbReference>
<dbReference type="PIR" id="C36796">
    <property type="entry name" value="WZBEA9"/>
</dbReference>
<dbReference type="SMR" id="P28960"/>
<dbReference type="KEGG" id="vg:1487566"/>
<dbReference type="Proteomes" id="UP000001189">
    <property type="component" value="Segment"/>
</dbReference>
<dbReference type="GO" id="GO:0030430">
    <property type="term" value="C:host cell cytoplasm"/>
    <property type="evidence" value="ECO:0000314"/>
    <property type="project" value="CACAO"/>
</dbReference>
<dbReference type="GO" id="GO:0044177">
    <property type="term" value="C:host cell Golgi apparatus"/>
    <property type="evidence" value="ECO:0007669"/>
    <property type="project" value="UniProtKB-SubCell"/>
</dbReference>
<dbReference type="GO" id="GO:0042025">
    <property type="term" value="C:host cell nucleus"/>
    <property type="evidence" value="ECO:0000314"/>
    <property type="project" value="CACAO"/>
</dbReference>
<dbReference type="GO" id="GO:0019033">
    <property type="term" value="C:viral tegument"/>
    <property type="evidence" value="ECO:0007669"/>
    <property type="project" value="UniProtKB-SubCell"/>
</dbReference>
<dbReference type="InterPro" id="IPR006908">
    <property type="entry name" value="Herpes_UL49"/>
</dbReference>
<dbReference type="Pfam" id="PF04823">
    <property type="entry name" value="Herpes_UL49_2"/>
    <property type="match status" value="1"/>
</dbReference>
<sequence length="304" mass="33241">MSDTWRRRRSGCNDANATEELVYSTVRSDHRQRRPSRGTFVMRENDLYDKQSVSKENDLYESASPNDDKVYTRRGMSTAAHYRDSEHIYETCEGDEFYDACEYSLIGGGKLSTSNGRQSPAKAQPPPRGAAAAPPPRVPTRPPTRAAATSTTPRQQDCAPKQRASPGVNSIKSGKGLAFSGTPKTPKSQWYGATHLFNKNVFCAAVSRVAAAHASDAASALWDLNPPKTNEDLDRFLKAAAIRILVCEGAQLLEVANSTMESTPDGYAAAGPNGYDRRPRTASRRRSLKCKPPADDFFDDTNSG</sequence>
<organism>
    <name type="scientific">Equine herpesvirus 1 (strain Ab4p)</name>
    <name type="common">EHV-1</name>
    <name type="synonym">Equine abortion virus</name>
    <dbReference type="NCBI Taxonomy" id="31520"/>
    <lineage>
        <taxon>Viruses</taxon>
        <taxon>Duplodnaviria</taxon>
        <taxon>Heunggongvirae</taxon>
        <taxon>Peploviricota</taxon>
        <taxon>Herviviricetes</taxon>
        <taxon>Herpesvirales</taxon>
        <taxon>Orthoherpesviridae</taxon>
        <taxon>Alphaherpesvirinae</taxon>
        <taxon>Varicellovirus</taxon>
        <taxon>Varicellovirus equidalpha1</taxon>
        <taxon>Equid alphaherpesvirus 1</taxon>
    </lineage>
</organism>
<organismHost>
    <name type="scientific">Equus caballus</name>
    <name type="common">Horse</name>
    <dbReference type="NCBI Taxonomy" id="9796"/>
</organismHost>
<keyword id="KW-1035">Host cytoplasm</keyword>
<keyword id="KW-1040">Host Golgi apparatus</keyword>
<keyword id="KW-1048">Host nucleus</keyword>
<keyword id="KW-0597">Phosphoprotein</keyword>
<keyword id="KW-1185">Reference proteome</keyword>
<keyword id="KW-0946">Virion</keyword>
<keyword id="KW-0920">Virion tegument</keyword>